<sequence length="35" mass="3925">LAGGLTEPRPADTEIQEIANKVKPQLEEKTNKKYD</sequence>
<organism>
    <name type="scientific">Sus scrofa</name>
    <name type="common">Pig</name>
    <dbReference type="NCBI Taxonomy" id="9823"/>
    <lineage>
        <taxon>Eukaryota</taxon>
        <taxon>Metazoa</taxon>
        <taxon>Chordata</taxon>
        <taxon>Craniata</taxon>
        <taxon>Vertebrata</taxon>
        <taxon>Euteleostomi</taxon>
        <taxon>Mammalia</taxon>
        <taxon>Eutheria</taxon>
        <taxon>Laurasiatheria</taxon>
        <taxon>Artiodactyla</taxon>
        <taxon>Suina</taxon>
        <taxon>Suidae</taxon>
        <taxon>Sus</taxon>
    </lineage>
</organism>
<accession>P80736</accession>
<name>CPI2_PIG</name>
<protein>
    <recommendedName>
        <fullName>Leukocyte cysteine proteinase inhibitor 2</fullName>
    </recommendedName>
    <alternativeName>
        <fullName>PLCPII</fullName>
    </alternativeName>
    <alternativeName>
        <fullName>Stefin-D2</fullName>
    </alternativeName>
</protein>
<proteinExistence type="evidence at protein level"/>
<feature type="chain" id="PRO_0000207150" description="Leukocyte cysteine proteinase inhibitor 2">
    <location>
        <begin position="1" status="less than"/>
        <end position="35" status="greater than"/>
    </location>
</feature>
<feature type="region of interest" description="Disordered" evidence="2">
    <location>
        <begin position="1"/>
        <end position="35"/>
    </location>
</feature>
<feature type="compositionally biased region" description="Basic and acidic residues" evidence="2">
    <location>
        <begin position="24"/>
        <end position="35"/>
    </location>
</feature>
<feature type="site" description="Reactive site" evidence="1">
    <location>
        <position position="3"/>
    </location>
</feature>
<feature type="non-terminal residue">
    <location>
        <position position="1"/>
    </location>
</feature>
<feature type="non-terminal residue">
    <location>
        <position position="35"/>
    </location>
</feature>
<comment type="function">
    <text>Potent inhibitor of cathepsins L and S, and papain.</text>
</comment>
<comment type="subcellular location">
    <subcellularLocation>
        <location>Cytoplasm</location>
    </subcellularLocation>
</comment>
<comment type="similarity">
    <text evidence="3">Belongs to the cystatin family.</text>
</comment>
<keyword id="KW-0963">Cytoplasm</keyword>
<keyword id="KW-0903">Direct protein sequencing</keyword>
<keyword id="KW-0646">Protease inhibitor</keyword>
<keyword id="KW-1185">Reference proteome</keyword>
<keyword id="KW-0789">Thiol protease inhibitor</keyword>
<reference key="1">
    <citation type="journal article" date="1996" name="FEBS Lett.">
        <title>Differences in specificity for the interactions of stefins A, B and D with cysteine proteinases.</title>
        <authorList>
            <person name="Lenarcic B."/>
            <person name="Krizaj I."/>
            <person name="Zunec P."/>
            <person name="Turk V."/>
        </authorList>
    </citation>
    <scope>PROTEIN SEQUENCE</scope>
    <source>
        <tissue>Thymus</tissue>
    </source>
</reference>
<dbReference type="SMR" id="P80736"/>
<dbReference type="PeptideAtlas" id="P80736"/>
<dbReference type="InParanoid" id="P80736"/>
<dbReference type="Proteomes" id="UP000008227">
    <property type="component" value="Unplaced"/>
</dbReference>
<dbReference type="Proteomes" id="UP000314985">
    <property type="component" value="Unplaced"/>
</dbReference>
<dbReference type="Proteomes" id="UP000694570">
    <property type="component" value="Unplaced"/>
</dbReference>
<dbReference type="Proteomes" id="UP000694571">
    <property type="component" value="Unplaced"/>
</dbReference>
<dbReference type="Proteomes" id="UP000694720">
    <property type="component" value="Unplaced"/>
</dbReference>
<dbReference type="Proteomes" id="UP000694722">
    <property type="component" value="Unplaced"/>
</dbReference>
<dbReference type="Proteomes" id="UP000694723">
    <property type="component" value="Unplaced"/>
</dbReference>
<dbReference type="Proteomes" id="UP000694724">
    <property type="component" value="Unplaced"/>
</dbReference>
<dbReference type="Proteomes" id="UP000694725">
    <property type="component" value="Unplaced"/>
</dbReference>
<dbReference type="Proteomes" id="UP000694726">
    <property type="component" value="Unplaced"/>
</dbReference>
<dbReference type="Proteomes" id="UP000694727">
    <property type="component" value="Unplaced"/>
</dbReference>
<dbReference type="Proteomes" id="UP000694728">
    <property type="component" value="Unplaced"/>
</dbReference>
<dbReference type="GO" id="GO:0005737">
    <property type="term" value="C:cytoplasm"/>
    <property type="evidence" value="ECO:0007669"/>
    <property type="project" value="UniProtKB-SubCell"/>
</dbReference>
<dbReference type="GO" id="GO:0004869">
    <property type="term" value="F:cysteine-type endopeptidase inhibitor activity"/>
    <property type="evidence" value="ECO:0007669"/>
    <property type="project" value="UniProtKB-KW"/>
</dbReference>
<dbReference type="Gene3D" id="3.10.450.10">
    <property type="match status" value="1"/>
</dbReference>
<dbReference type="InterPro" id="IPR000010">
    <property type="entry name" value="Cystatin_dom"/>
</dbReference>
<dbReference type="InterPro" id="IPR046350">
    <property type="entry name" value="Cystatin_sf"/>
</dbReference>
<dbReference type="InterPro" id="IPR001713">
    <property type="entry name" value="Prot_inh_stefin"/>
</dbReference>
<dbReference type="Pfam" id="PF00031">
    <property type="entry name" value="Cystatin"/>
    <property type="match status" value="1"/>
</dbReference>
<dbReference type="PRINTS" id="PR00295">
    <property type="entry name" value="STEFINA"/>
</dbReference>
<dbReference type="SUPFAM" id="SSF54403">
    <property type="entry name" value="Cystatin/monellin"/>
    <property type="match status" value="1"/>
</dbReference>
<evidence type="ECO:0000250" key="1"/>
<evidence type="ECO:0000256" key="2">
    <source>
        <dbReference type="SAM" id="MobiDB-lite"/>
    </source>
</evidence>
<evidence type="ECO:0000305" key="3"/>